<name>Y076_MYCGE</name>
<evidence type="ECO:0000255" key="1"/>
<evidence type="ECO:0000305" key="2"/>
<comment type="subcellular location">
    <subcellularLocation>
        <location evidence="2">Cell membrane</location>
        <topology evidence="2">Multi-pass membrane protein</topology>
    </subcellularLocation>
</comment>
<dbReference type="EMBL" id="L43967">
    <property type="protein sequence ID" value="AAC71294.1"/>
    <property type="molecule type" value="Genomic_DNA"/>
</dbReference>
<dbReference type="PIR" id="D64208">
    <property type="entry name" value="D64208"/>
</dbReference>
<dbReference type="RefSeq" id="WP_009885931.1">
    <property type="nucleotide sequence ID" value="NC_000908.2"/>
</dbReference>
<dbReference type="STRING" id="243273.MG_076"/>
<dbReference type="GeneID" id="88282199"/>
<dbReference type="KEGG" id="mge:MG_076"/>
<dbReference type="eggNOG" id="ENOG5031ZBB">
    <property type="taxonomic scope" value="Bacteria"/>
</dbReference>
<dbReference type="HOGENOM" id="CLU_1852996_0_0_14"/>
<dbReference type="InParanoid" id="P47322"/>
<dbReference type="OrthoDB" id="9984030at2"/>
<dbReference type="BioCyc" id="MGEN243273:G1GJ2-88-MONOMER"/>
<dbReference type="Proteomes" id="UP000000807">
    <property type="component" value="Chromosome"/>
</dbReference>
<dbReference type="GO" id="GO:0005886">
    <property type="term" value="C:plasma membrane"/>
    <property type="evidence" value="ECO:0007669"/>
    <property type="project" value="UniProtKB-SubCell"/>
</dbReference>
<dbReference type="NCBIfam" id="NF045743">
    <property type="entry name" value="MPN214"/>
    <property type="match status" value="1"/>
</dbReference>
<sequence length="138" mass="15867">MVLNQNKNSNKAEYGGIVVSVFYLILFFLILNITIYFHKSTNFTVVVKNSVLTSFFVNLLLVCLQGIFRLKTCDGMRYEISKFNRYLKLGSVYAKPLVSFNQYQDQSATYRQKTSGFWWMNLIVYLVGSLVSGLVSLL</sequence>
<feature type="chain" id="PRO_0000210413" description="Uncharacterized protein MG076">
    <location>
        <begin position="1"/>
        <end position="138"/>
    </location>
</feature>
<feature type="transmembrane region" description="Helical" evidence="1">
    <location>
        <begin position="17"/>
        <end position="37"/>
    </location>
</feature>
<feature type="transmembrane region" description="Helical" evidence="1">
    <location>
        <begin position="43"/>
        <end position="63"/>
    </location>
</feature>
<feature type="transmembrane region" description="Helical" evidence="1">
    <location>
        <begin position="117"/>
        <end position="137"/>
    </location>
</feature>
<reference key="1">
    <citation type="journal article" date="1995" name="Science">
        <title>The minimal gene complement of Mycoplasma genitalium.</title>
        <authorList>
            <person name="Fraser C.M."/>
            <person name="Gocayne J.D."/>
            <person name="White O."/>
            <person name="Adams M.D."/>
            <person name="Clayton R.A."/>
            <person name="Fleischmann R.D."/>
            <person name="Bult C.J."/>
            <person name="Kerlavage A.R."/>
            <person name="Sutton G.G."/>
            <person name="Kelley J.M."/>
            <person name="Fritchman J.L."/>
            <person name="Weidman J.F."/>
            <person name="Small K.V."/>
            <person name="Sandusky M."/>
            <person name="Fuhrmann J.L."/>
            <person name="Nguyen D.T."/>
            <person name="Utterback T.R."/>
            <person name="Saudek D.M."/>
            <person name="Phillips C.A."/>
            <person name="Merrick J.M."/>
            <person name="Tomb J.-F."/>
            <person name="Dougherty B.A."/>
            <person name="Bott K.F."/>
            <person name="Hu P.-C."/>
            <person name="Lucier T.S."/>
            <person name="Peterson S.N."/>
            <person name="Smith H.O."/>
            <person name="Hutchison C.A. III"/>
            <person name="Venter J.C."/>
        </authorList>
    </citation>
    <scope>NUCLEOTIDE SEQUENCE [LARGE SCALE GENOMIC DNA]</scope>
    <source>
        <strain>ATCC 33530 / DSM 19775 / NCTC 10195 / G37</strain>
    </source>
</reference>
<proteinExistence type="predicted"/>
<accession>P47322</accession>
<organism>
    <name type="scientific">Mycoplasma genitalium (strain ATCC 33530 / DSM 19775 / NCTC 10195 / G37)</name>
    <name type="common">Mycoplasmoides genitalium</name>
    <dbReference type="NCBI Taxonomy" id="243273"/>
    <lineage>
        <taxon>Bacteria</taxon>
        <taxon>Bacillati</taxon>
        <taxon>Mycoplasmatota</taxon>
        <taxon>Mycoplasmoidales</taxon>
        <taxon>Mycoplasmoidaceae</taxon>
        <taxon>Mycoplasmoides</taxon>
    </lineage>
</organism>
<keyword id="KW-1003">Cell membrane</keyword>
<keyword id="KW-0472">Membrane</keyword>
<keyword id="KW-1185">Reference proteome</keyword>
<keyword id="KW-0812">Transmembrane</keyword>
<keyword id="KW-1133">Transmembrane helix</keyword>
<gene>
    <name type="ordered locus">MG076</name>
</gene>
<protein>
    <recommendedName>
        <fullName>Uncharacterized protein MG076</fullName>
    </recommendedName>
</protein>